<name>HCT1_CHLPN</name>
<feature type="chain" id="PRO_0000196017" description="Histone H1-like protein HC1">
    <location>
        <begin position="1"/>
        <end position="123"/>
    </location>
</feature>
<feature type="region of interest" description="Disordered" evidence="1">
    <location>
        <begin position="54"/>
        <end position="123"/>
    </location>
</feature>
<feature type="compositionally biased region" description="Basic residues" evidence="1">
    <location>
        <begin position="61"/>
        <end position="75"/>
    </location>
</feature>
<feature type="compositionally biased region" description="Low complexity" evidence="1">
    <location>
        <begin position="85"/>
        <end position="102"/>
    </location>
</feature>
<feature type="compositionally biased region" description="Basic residues" evidence="1">
    <location>
        <begin position="103"/>
        <end position="123"/>
    </location>
</feature>
<comment type="function">
    <text>Might have a role analogous to that of eukaryotic histone proteins.</text>
</comment>
<comment type="developmental stage">
    <text>Specific to the EB (elementary body) form in the life cycle of chlamydiae.</text>
</comment>
<comment type="similarity">
    <text evidence="2">Belongs to the histone H1/H5 family. HCT subfamily.</text>
</comment>
<comment type="sequence caution" evidence="2">
    <conflict type="erroneous initiation">
        <sequence resource="EMBL-CDS" id="AAP98845"/>
    </conflict>
</comment>
<sequence>MALKDTAKKMKDLLDSIQHDLAKAEKGNKAAAQRVRTDSIKLEKVAKLYRKESIKAEKSGLLKRKPSTKAPAKVKKTAEKKAPKKSSAAAAKTSKAVKASKPASKKTAAKKVKKPSKARGFRK</sequence>
<protein>
    <recommendedName>
        <fullName>Histone H1-like protein HC1</fullName>
    </recommendedName>
</protein>
<reference key="1">
    <citation type="journal article" date="1999" name="Nat. Genet.">
        <title>Comparative genomes of Chlamydia pneumoniae and C. trachomatis.</title>
        <authorList>
            <person name="Kalman S."/>
            <person name="Mitchell W.P."/>
            <person name="Marathe R."/>
            <person name="Lammel C.J."/>
            <person name="Fan J."/>
            <person name="Hyman R.W."/>
            <person name="Olinger L."/>
            <person name="Grimwood J."/>
            <person name="Davis R.W."/>
            <person name="Stephens R.S."/>
        </authorList>
    </citation>
    <scope>NUCLEOTIDE SEQUENCE [LARGE SCALE GENOMIC DNA]</scope>
    <source>
        <strain>CWL029</strain>
    </source>
</reference>
<reference key="2">
    <citation type="journal article" date="2000" name="Nucleic Acids Res.">
        <title>Genome sequences of Chlamydia trachomatis MoPn and Chlamydia pneumoniae AR39.</title>
        <authorList>
            <person name="Read T.D."/>
            <person name="Brunham R.C."/>
            <person name="Shen C."/>
            <person name="Gill S.R."/>
            <person name="Heidelberg J.F."/>
            <person name="White O."/>
            <person name="Hickey E.K."/>
            <person name="Peterson J.D."/>
            <person name="Utterback T.R."/>
            <person name="Berry K.J."/>
            <person name="Bass S."/>
            <person name="Linher K.D."/>
            <person name="Weidman J.F."/>
            <person name="Khouri H.M."/>
            <person name="Craven B."/>
            <person name="Bowman C."/>
            <person name="Dodson R.J."/>
            <person name="Gwinn M.L."/>
            <person name="Nelson W.C."/>
            <person name="DeBoy R.T."/>
            <person name="Kolonay J.F."/>
            <person name="McClarty G."/>
            <person name="Salzberg S.L."/>
            <person name="Eisen J.A."/>
            <person name="Fraser C.M."/>
        </authorList>
    </citation>
    <scope>NUCLEOTIDE SEQUENCE [LARGE SCALE GENOMIC DNA]</scope>
    <source>
        <strain>AR39</strain>
    </source>
</reference>
<reference key="3">
    <citation type="journal article" date="2000" name="Nucleic Acids Res.">
        <title>Comparison of whole genome sequences of Chlamydia pneumoniae J138 from Japan and CWL029 from USA.</title>
        <authorList>
            <person name="Shirai M."/>
            <person name="Hirakawa H."/>
            <person name="Kimoto M."/>
            <person name="Tabuchi M."/>
            <person name="Kishi F."/>
            <person name="Ouchi K."/>
            <person name="Shiba T."/>
            <person name="Ishii K."/>
            <person name="Hattori M."/>
            <person name="Kuhara S."/>
            <person name="Nakazawa T."/>
        </authorList>
    </citation>
    <scope>NUCLEOTIDE SEQUENCE [LARGE SCALE GENOMIC DNA]</scope>
    <source>
        <strain>J138</strain>
    </source>
</reference>
<reference key="4">
    <citation type="submission" date="2002-05" db="EMBL/GenBank/DDBJ databases">
        <title>The genome sequence of Chlamydia pneumoniae TW183 and comparison with other Chlamydia strains based on whole genome sequence analysis.</title>
        <authorList>
            <person name="Geng M.M."/>
            <person name="Schuhmacher A."/>
            <person name="Muehldorfer I."/>
            <person name="Bensch K.W."/>
            <person name="Schaefer K.P."/>
            <person name="Schneider S."/>
            <person name="Pohl T."/>
            <person name="Essig A."/>
            <person name="Marre R."/>
            <person name="Melchers K."/>
        </authorList>
    </citation>
    <scope>NUCLEOTIDE SEQUENCE [LARGE SCALE GENOMIC DNA]</scope>
    <source>
        <strain>TW-183</strain>
    </source>
</reference>
<evidence type="ECO:0000256" key="1">
    <source>
        <dbReference type="SAM" id="MobiDB-lite"/>
    </source>
</evidence>
<evidence type="ECO:0000305" key="2"/>
<dbReference type="EMBL" id="AE001363">
    <property type="protein sequence ID" value="AAD19024.1"/>
    <property type="molecule type" value="Genomic_DNA"/>
</dbReference>
<dbReference type="EMBL" id="AE002161">
    <property type="protein sequence ID" value="AAF38760.1"/>
    <property type="molecule type" value="Genomic_DNA"/>
</dbReference>
<dbReference type="EMBL" id="BA000008">
    <property type="protein sequence ID" value="BAA99094.1"/>
    <property type="molecule type" value="Genomic_DNA"/>
</dbReference>
<dbReference type="EMBL" id="AE009440">
    <property type="protein sequence ID" value="AAP98845.1"/>
    <property type="status" value="ALT_INIT"/>
    <property type="molecule type" value="Genomic_DNA"/>
</dbReference>
<dbReference type="PIR" id="B72023">
    <property type="entry name" value="B72023"/>
</dbReference>
<dbReference type="PIR" id="D86601">
    <property type="entry name" value="D86601"/>
</dbReference>
<dbReference type="RefSeq" id="NP_225081.1">
    <property type="nucleotide sequence ID" value="NC_000922.1"/>
</dbReference>
<dbReference type="RefSeq" id="WP_010883521.1">
    <property type="nucleotide sequence ID" value="NZ_LN847257.1"/>
</dbReference>
<dbReference type="SMR" id="Q9Z720"/>
<dbReference type="STRING" id="406984.CPK_ORF00296"/>
<dbReference type="GeneID" id="45050941"/>
<dbReference type="KEGG" id="cpa:CP_0980"/>
<dbReference type="KEGG" id="cpj:hctA"/>
<dbReference type="KEGG" id="cpn:CPn_0886"/>
<dbReference type="KEGG" id="cpt:CpB0916"/>
<dbReference type="PATRIC" id="fig|115713.3.peg.967"/>
<dbReference type="HOGENOM" id="CLU_148744_0_0_0"/>
<dbReference type="OrthoDB" id="22023at2"/>
<dbReference type="Proteomes" id="UP000000583">
    <property type="component" value="Chromosome"/>
</dbReference>
<dbReference type="Proteomes" id="UP000000801">
    <property type="component" value="Chromosome"/>
</dbReference>
<dbReference type="GO" id="GO:0003677">
    <property type="term" value="F:DNA binding"/>
    <property type="evidence" value="ECO:0007669"/>
    <property type="project" value="UniProtKB-KW"/>
</dbReference>
<dbReference type="GO" id="GO:0030527">
    <property type="term" value="F:structural constituent of chromatin"/>
    <property type="evidence" value="ECO:0007669"/>
    <property type="project" value="InterPro"/>
</dbReference>
<dbReference type="InterPro" id="IPR010886">
    <property type="entry name" value="Hc1"/>
</dbReference>
<dbReference type="Pfam" id="PF07432">
    <property type="entry name" value="Hc1"/>
    <property type="match status" value="1"/>
</dbReference>
<organism>
    <name type="scientific">Chlamydia pneumoniae</name>
    <name type="common">Chlamydophila pneumoniae</name>
    <dbReference type="NCBI Taxonomy" id="83558"/>
    <lineage>
        <taxon>Bacteria</taxon>
        <taxon>Pseudomonadati</taxon>
        <taxon>Chlamydiota</taxon>
        <taxon>Chlamydiia</taxon>
        <taxon>Chlamydiales</taxon>
        <taxon>Chlamydiaceae</taxon>
        <taxon>Chlamydia/Chlamydophila group</taxon>
        <taxon>Chlamydia</taxon>
    </lineage>
</organism>
<proteinExistence type="evidence at transcript level"/>
<keyword id="KW-0238">DNA-binding</keyword>
<keyword id="KW-0677">Repeat</keyword>
<gene>
    <name type="primary">hctA</name>
    <name type="ordered locus">CPn_0886</name>
    <name type="ordered locus">CP_0980</name>
    <name type="ordered locus">CpB0916</name>
</gene>
<accession>Q9Z720</accession>
<accession>Q9JQC7</accession>